<comment type="function">
    <text evidence="1">Confers resistance to fosfomycin and deoxycholate.</text>
</comment>
<comment type="subcellular location">
    <subcellularLocation>
        <location evidence="1">Cell inner membrane</location>
        <topology evidence="1">Multi-pass membrane protein</topology>
    </subcellularLocation>
</comment>
<comment type="similarity">
    <text evidence="1">Belongs to the major facilitator superfamily. DHA1 family. MdtG (TC 2.A.1.2.20) subfamily.</text>
</comment>
<sequence>MSPCENDTPINWKRNLIVAWLGCFLTGAAFSLVMPFLPLYVEQLGVTGHSALNMWSGIVFSITFLFSAIASPFWGGLADRKGRKLMLLRSALGMGIVMVLMGLAQNIWQFLILRALLGLLGGFVPNANALIATQVPRNKSGWALGTLSTGGVSGALLGPMAGGLLADSYGLRPVFFITASVLILCFFVTLFCIREKFQPVSKKEMLHMREVVTSLKNPKLVLSLFVTTLIIQVATGSIAPILTLYVRELAGNVSNVAFISGMIASVPGVAALLSAPRLGKLGDRIGPEKILITALIFSVLLLIPMSYVQTPLQLGILRFLLGAADGALLPAVQTLLVYNSSNQIAGRIFSYNQSFRDIGNVTGPLMGAAISANYGFRAVFLVTAGVVLFNAVYSWNSLRRRRIPQVSN</sequence>
<protein>
    <recommendedName>
        <fullName evidence="1">Multidrug resistance protein MdtG</fullName>
    </recommendedName>
</protein>
<accession>B1IV49</accession>
<gene>
    <name evidence="1" type="primary">mdtG</name>
    <name type="ordered locus">EcolC_2547</name>
</gene>
<proteinExistence type="inferred from homology"/>
<dbReference type="EMBL" id="CP000946">
    <property type="protein sequence ID" value="ACA78178.1"/>
    <property type="molecule type" value="Genomic_DNA"/>
</dbReference>
<dbReference type="RefSeq" id="WP_000074172.1">
    <property type="nucleotide sequence ID" value="NZ_MTFT01000032.1"/>
</dbReference>
<dbReference type="SMR" id="B1IV49"/>
<dbReference type="GeneID" id="75203640"/>
<dbReference type="KEGG" id="ecl:EcolC_2547"/>
<dbReference type="HOGENOM" id="CLU_001265_57_3_6"/>
<dbReference type="GO" id="GO:0005886">
    <property type="term" value="C:plasma membrane"/>
    <property type="evidence" value="ECO:0007669"/>
    <property type="project" value="UniProtKB-SubCell"/>
</dbReference>
<dbReference type="GO" id="GO:0022857">
    <property type="term" value="F:transmembrane transporter activity"/>
    <property type="evidence" value="ECO:0007669"/>
    <property type="project" value="UniProtKB-UniRule"/>
</dbReference>
<dbReference type="GO" id="GO:0046677">
    <property type="term" value="P:response to antibiotic"/>
    <property type="evidence" value="ECO:0007669"/>
    <property type="project" value="UniProtKB-KW"/>
</dbReference>
<dbReference type="CDD" id="cd17391">
    <property type="entry name" value="MFS_MdtG_MDR_like"/>
    <property type="match status" value="1"/>
</dbReference>
<dbReference type="FunFam" id="1.20.1250.20:FF:000020">
    <property type="entry name" value="Multidrug resistance protein MdtG"/>
    <property type="match status" value="1"/>
</dbReference>
<dbReference type="FunFam" id="1.20.1250.20:FF:000022">
    <property type="entry name" value="Multidrug resistance protein MdtG"/>
    <property type="match status" value="1"/>
</dbReference>
<dbReference type="Gene3D" id="1.20.1250.20">
    <property type="entry name" value="MFS general substrate transporter like domains"/>
    <property type="match status" value="2"/>
</dbReference>
<dbReference type="HAMAP" id="MF_01528">
    <property type="entry name" value="MFS_MdtG"/>
    <property type="match status" value="1"/>
</dbReference>
<dbReference type="InterPro" id="IPR011701">
    <property type="entry name" value="MFS"/>
</dbReference>
<dbReference type="InterPro" id="IPR020846">
    <property type="entry name" value="MFS_dom"/>
</dbReference>
<dbReference type="InterPro" id="IPR050497">
    <property type="entry name" value="MFS_MdtG_subfamily"/>
</dbReference>
<dbReference type="InterPro" id="IPR036259">
    <property type="entry name" value="MFS_trans_sf"/>
</dbReference>
<dbReference type="InterPro" id="IPR023692">
    <property type="entry name" value="Mutidrug-R_MdtG"/>
</dbReference>
<dbReference type="InterPro" id="IPR001958">
    <property type="entry name" value="Tet-R_TetA/multi-R_MdtG-like"/>
</dbReference>
<dbReference type="NCBIfam" id="NF007372">
    <property type="entry name" value="PRK09874.1"/>
    <property type="match status" value="1"/>
</dbReference>
<dbReference type="PANTHER" id="PTHR43414">
    <property type="entry name" value="MULTIDRUG RESISTANCE PROTEIN MDTG"/>
    <property type="match status" value="1"/>
</dbReference>
<dbReference type="PANTHER" id="PTHR43414:SF6">
    <property type="entry name" value="MULTIDRUG RESISTANCE PROTEIN MDTG"/>
    <property type="match status" value="1"/>
</dbReference>
<dbReference type="Pfam" id="PF07690">
    <property type="entry name" value="MFS_1"/>
    <property type="match status" value="1"/>
</dbReference>
<dbReference type="PRINTS" id="PR01035">
    <property type="entry name" value="TCRTETA"/>
</dbReference>
<dbReference type="SUPFAM" id="SSF103473">
    <property type="entry name" value="MFS general substrate transporter"/>
    <property type="match status" value="1"/>
</dbReference>
<dbReference type="PROSITE" id="PS50850">
    <property type="entry name" value="MFS"/>
    <property type="match status" value="1"/>
</dbReference>
<keyword id="KW-0046">Antibiotic resistance</keyword>
<keyword id="KW-0997">Cell inner membrane</keyword>
<keyword id="KW-1003">Cell membrane</keyword>
<keyword id="KW-0472">Membrane</keyword>
<keyword id="KW-0812">Transmembrane</keyword>
<keyword id="KW-1133">Transmembrane helix</keyword>
<keyword id="KW-0813">Transport</keyword>
<organism>
    <name type="scientific">Escherichia coli (strain ATCC 8739 / DSM 1576 / NBRC 3972 / NCIMB 8545 / WDCM 00012 / Crooks)</name>
    <dbReference type="NCBI Taxonomy" id="481805"/>
    <lineage>
        <taxon>Bacteria</taxon>
        <taxon>Pseudomonadati</taxon>
        <taxon>Pseudomonadota</taxon>
        <taxon>Gammaproteobacteria</taxon>
        <taxon>Enterobacterales</taxon>
        <taxon>Enterobacteriaceae</taxon>
        <taxon>Escherichia</taxon>
    </lineage>
</organism>
<name>MDTG_ECOLC</name>
<evidence type="ECO:0000255" key="1">
    <source>
        <dbReference type="HAMAP-Rule" id="MF_01528"/>
    </source>
</evidence>
<reference key="1">
    <citation type="submission" date="2008-02" db="EMBL/GenBank/DDBJ databases">
        <title>Complete sequence of Escherichia coli C str. ATCC 8739.</title>
        <authorList>
            <person name="Copeland A."/>
            <person name="Lucas S."/>
            <person name="Lapidus A."/>
            <person name="Glavina del Rio T."/>
            <person name="Dalin E."/>
            <person name="Tice H."/>
            <person name="Bruce D."/>
            <person name="Goodwin L."/>
            <person name="Pitluck S."/>
            <person name="Kiss H."/>
            <person name="Brettin T."/>
            <person name="Detter J.C."/>
            <person name="Han C."/>
            <person name="Kuske C.R."/>
            <person name="Schmutz J."/>
            <person name="Larimer F."/>
            <person name="Land M."/>
            <person name="Hauser L."/>
            <person name="Kyrpides N."/>
            <person name="Mikhailova N."/>
            <person name="Ingram L."/>
            <person name="Richardson P."/>
        </authorList>
    </citation>
    <scope>NUCLEOTIDE SEQUENCE [LARGE SCALE GENOMIC DNA]</scope>
    <source>
        <strain>ATCC 8739 / DSM 1576 / NBRC 3972 / NCIMB 8545 / WDCM 00012 / Crooks</strain>
    </source>
</reference>
<feature type="chain" id="PRO_1000087585" description="Multidrug resistance protein MdtG">
    <location>
        <begin position="1"/>
        <end position="408"/>
    </location>
</feature>
<feature type="transmembrane region" description="Helical" evidence="1">
    <location>
        <begin position="16"/>
        <end position="36"/>
    </location>
</feature>
<feature type="transmembrane region" description="Helical" evidence="1">
    <location>
        <begin position="58"/>
        <end position="78"/>
    </location>
</feature>
<feature type="transmembrane region" description="Helical" evidence="1">
    <location>
        <begin position="92"/>
        <end position="112"/>
    </location>
</feature>
<feature type="transmembrane region" description="Helical" evidence="1">
    <location>
        <begin position="115"/>
        <end position="135"/>
    </location>
</feature>
<feature type="transmembrane region" description="Helical" evidence="1">
    <location>
        <begin position="146"/>
        <end position="166"/>
    </location>
</feature>
<feature type="transmembrane region" description="Helical" evidence="1">
    <location>
        <begin position="173"/>
        <end position="193"/>
    </location>
</feature>
<feature type="transmembrane region" description="Helical" evidence="1">
    <location>
        <begin position="224"/>
        <end position="244"/>
    </location>
</feature>
<feature type="transmembrane region" description="Helical" evidence="1">
    <location>
        <begin position="256"/>
        <end position="276"/>
    </location>
</feature>
<feature type="transmembrane region" description="Helical" evidence="1">
    <location>
        <begin position="290"/>
        <end position="310"/>
    </location>
</feature>
<feature type="transmembrane region" description="Helical" evidence="1">
    <location>
        <begin position="319"/>
        <end position="339"/>
    </location>
</feature>
<feature type="transmembrane region" description="Helical" evidence="1">
    <location>
        <begin position="378"/>
        <end position="398"/>
    </location>
</feature>